<dbReference type="EC" id="1.1.1.100"/>
<dbReference type="EMBL" id="AF044668">
    <property type="protein sequence ID" value="AAC38650.1"/>
    <property type="molecule type" value="Genomic_DNA"/>
</dbReference>
<dbReference type="EMBL" id="AE006468">
    <property type="protein sequence ID" value="AAL20124.1"/>
    <property type="molecule type" value="Genomic_DNA"/>
</dbReference>
<dbReference type="RefSeq" id="NP_460165.1">
    <property type="nucleotide sequence ID" value="NC_003197.2"/>
</dbReference>
<dbReference type="RefSeq" id="WP_000007236.1">
    <property type="nucleotide sequence ID" value="NC_003197.2"/>
</dbReference>
<dbReference type="PDB" id="6T5X">
    <property type="method" value="X-ray"/>
    <property type="resolution" value="1.50 A"/>
    <property type="chains" value="A/B=1-244"/>
</dbReference>
<dbReference type="PDB" id="6T7M">
    <property type="method" value="X-ray"/>
    <property type="resolution" value="2.65 A"/>
    <property type="chains" value="A/B/C/D=1-244"/>
</dbReference>
<dbReference type="PDBsum" id="6T5X"/>
<dbReference type="PDBsum" id="6T7M"/>
<dbReference type="SMR" id="P0A2C9"/>
<dbReference type="STRING" id="99287.STM1195"/>
<dbReference type="PaxDb" id="99287-STM1195"/>
<dbReference type="GeneID" id="1252713"/>
<dbReference type="GeneID" id="66755598"/>
<dbReference type="KEGG" id="stm:STM1195"/>
<dbReference type="PATRIC" id="fig|99287.12.peg.1264"/>
<dbReference type="HOGENOM" id="CLU_010194_1_3_6"/>
<dbReference type="OMA" id="LFGVQCD"/>
<dbReference type="PhylomeDB" id="P0A2C9"/>
<dbReference type="BioCyc" id="SENT99287:STM1195-MONOMER"/>
<dbReference type="UniPathway" id="UPA00094"/>
<dbReference type="PHI-base" id="PHI:8134"/>
<dbReference type="Proteomes" id="UP000001014">
    <property type="component" value="Chromosome"/>
</dbReference>
<dbReference type="GO" id="GO:0004316">
    <property type="term" value="F:3-oxoacyl-[acyl-carrier-protein] reductase (NADPH) activity"/>
    <property type="evidence" value="ECO:0000250"/>
    <property type="project" value="UniProtKB"/>
</dbReference>
<dbReference type="GO" id="GO:0046872">
    <property type="term" value="F:metal ion binding"/>
    <property type="evidence" value="ECO:0007669"/>
    <property type="project" value="UniProtKB-KW"/>
</dbReference>
<dbReference type="GO" id="GO:0051287">
    <property type="term" value="F:NAD binding"/>
    <property type="evidence" value="ECO:0007669"/>
    <property type="project" value="InterPro"/>
</dbReference>
<dbReference type="GO" id="GO:0050661">
    <property type="term" value="F:NADP binding"/>
    <property type="evidence" value="ECO:0000250"/>
    <property type="project" value="UniProtKB"/>
</dbReference>
<dbReference type="GO" id="GO:0016616">
    <property type="term" value="F:oxidoreductase activity, acting on the CH-OH group of donors, NAD or NADP as acceptor"/>
    <property type="evidence" value="ECO:0000318"/>
    <property type="project" value="GO_Central"/>
</dbReference>
<dbReference type="GO" id="GO:0030497">
    <property type="term" value="P:fatty acid elongation"/>
    <property type="evidence" value="ECO:0000315"/>
    <property type="project" value="UniProtKB"/>
</dbReference>
<dbReference type="CDD" id="cd05333">
    <property type="entry name" value="BKR_SDR_c"/>
    <property type="match status" value="1"/>
</dbReference>
<dbReference type="FunFam" id="3.40.50.720:FF:000037">
    <property type="entry name" value="3-oxoacyl-[acyl-carrier-protein] reductase FabG"/>
    <property type="match status" value="1"/>
</dbReference>
<dbReference type="Gene3D" id="3.40.50.720">
    <property type="entry name" value="NAD(P)-binding Rossmann-like Domain"/>
    <property type="match status" value="1"/>
</dbReference>
<dbReference type="InterPro" id="IPR011284">
    <property type="entry name" value="3oxo_ACP_reduc"/>
</dbReference>
<dbReference type="InterPro" id="IPR036291">
    <property type="entry name" value="NAD(P)-bd_dom_sf"/>
</dbReference>
<dbReference type="InterPro" id="IPR020904">
    <property type="entry name" value="Sc_DH/Rdtase_CS"/>
</dbReference>
<dbReference type="InterPro" id="IPR050259">
    <property type="entry name" value="SDR"/>
</dbReference>
<dbReference type="InterPro" id="IPR002347">
    <property type="entry name" value="SDR_fam"/>
</dbReference>
<dbReference type="NCBIfam" id="TIGR01830">
    <property type="entry name" value="3oxo_ACP_reduc"/>
    <property type="match status" value="1"/>
</dbReference>
<dbReference type="NCBIfam" id="NF004197">
    <property type="entry name" value="PRK05653.1-1"/>
    <property type="match status" value="1"/>
</dbReference>
<dbReference type="NCBIfam" id="NF005559">
    <property type="entry name" value="PRK07231.1"/>
    <property type="match status" value="1"/>
</dbReference>
<dbReference type="NCBIfam" id="NF009464">
    <property type="entry name" value="PRK12824.1"/>
    <property type="match status" value="1"/>
</dbReference>
<dbReference type="NCBIfam" id="NF009466">
    <property type="entry name" value="PRK12826.1-2"/>
    <property type="match status" value="1"/>
</dbReference>
<dbReference type="PANTHER" id="PTHR42879">
    <property type="entry name" value="3-OXOACYL-(ACYL-CARRIER-PROTEIN) REDUCTASE"/>
    <property type="match status" value="1"/>
</dbReference>
<dbReference type="PANTHER" id="PTHR42879:SF2">
    <property type="entry name" value="3-OXOACYL-[ACYL-CARRIER-PROTEIN] REDUCTASE FABG"/>
    <property type="match status" value="1"/>
</dbReference>
<dbReference type="Pfam" id="PF13561">
    <property type="entry name" value="adh_short_C2"/>
    <property type="match status" value="1"/>
</dbReference>
<dbReference type="PRINTS" id="PR00081">
    <property type="entry name" value="GDHRDH"/>
</dbReference>
<dbReference type="PRINTS" id="PR00080">
    <property type="entry name" value="SDRFAMILY"/>
</dbReference>
<dbReference type="SMART" id="SM00822">
    <property type="entry name" value="PKS_KR"/>
    <property type="match status" value="1"/>
</dbReference>
<dbReference type="SUPFAM" id="SSF51735">
    <property type="entry name" value="NAD(P)-binding Rossmann-fold domains"/>
    <property type="match status" value="1"/>
</dbReference>
<dbReference type="PROSITE" id="PS00061">
    <property type="entry name" value="ADH_SHORT"/>
    <property type="match status" value="1"/>
</dbReference>
<comment type="function">
    <text evidence="3">Catalyzes the NADPH-dependent reduction of beta-ketoacyl-ACP substrates to beta-hydroxyacyl-ACP products, the first reductive step in the elongation cycle of fatty acid biosynthesis.</text>
</comment>
<comment type="catalytic activity">
    <reaction>
        <text>a (3R)-hydroxyacyl-[ACP] + NADP(+) = a 3-oxoacyl-[ACP] + NADPH + H(+)</text>
        <dbReference type="Rhea" id="RHEA:17397"/>
        <dbReference type="Rhea" id="RHEA-COMP:9916"/>
        <dbReference type="Rhea" id="RHEA-COMP:9945"/>
        <dbReference type="ChEBI" id="CHEBI:15378"/>
        <dbReference type="ChEBI" id="CHEBI:57783"/>
        <dbReference type="ChEBI" id="CHEBI:58349"/>
        <dbReference type="ChEBI" id="CHEBI:78776"/>
        <dbReference type="ChEBI" id="CHEBI:78827"/>
        <dbReference type="EC" id="1.1.1.100"/>
    </reaction>
</comment>
<comment type="pathway">
    <text>Lipid metabolism; fatty acid biosynthesis.</text>
</comment>
<comment type="subunit">
    <text evidence="1">Homotetramer.</text>
</comment>
<comment type="miscellaneous">
    <text evidence="1">Calcium ions stabilize the structure, and may inhibit FabG activity by obstructing access to the active site.</text>
</comment>
<comment type="similarity">
    <text evidence="4">Belongs to the short-chain dehydrogenases/reductases (SDR) family.</text>
</comment>
<sequence>MSFEGKIALVTGASRGIGRAIAETLVARGAKVIGTATSENGAKNISDYLGANGKGLMLNVTDPASIESVLENIRAEFGEVDILVNNAGITRDNLLMRMKDDEWNDIIETNLSSVFRLSKAVMRAMMKKRCGRIITIGSVVGTMGNAGQANYAAAKAGLIGFSKSLAREVASRGITVNVVAPGFIETDMTRALSDDQRAGILAQVPAGRLGGAQEIASAVAFLASDEASYITGETLHVNGGMYMV</sequence>
<keyword id="KW-0002">3D-structure</keyword>
<keyword id="KW-0106">Calcium</keyword>
<keyword id="KW-0275">Fatty acid biosynthesis</keyword>
<keyword id="KW-0276">Fatty acid metabolism</keyword>
<keyword id="KW-0444">Lipid biosynthesis</keyword>
<keyword id="KW-0443">Lipid metabolism</keyword>
<keyword id="KW-0479">Metal-binding</keyword>
<keyword id="KW-0521">NADP</keyword>
<keyword id="KW-0560">Oxidoreductase</keyword>
<keyword id="KW-1185">Reference proteome</keyword>
<organism>
    <name type="scientific">Salmonella typhimurium (strain LT2 / SGSC1412 / ATCC 700720)</name>
    <dbReference type="NCBI Taxonomy" id="99287"/>
    <lineage>
        <taxon>Bacteria</taxon>
        <taxon>Pseudomonadati</taxon>
        <taxon>Pseudomonadota</taxon>
        <taxon>Gammaproteobacteria</taxon>
        <taxon>Enterobacterales</taxon>
        <taxon>Enterobacteriaceae</taxon>
        <taxon>Salmonella</taxon>
    </lineage>
</organism>
<proteinExistence type="evidence at protein level"/>
<evidence type="ECO:0000250" key="1"/>
<evidence type="ECO:0000255" key="2">
    <source>
        <dbReference type="PROSITE-ProRule" id="PRU10001"/>
    </source>
</evidence>
<evidence type="ECO:0000269" key="3">
    <source>
    </source>
</evidence>
<evidence type="ECO:0000305" key="4"/>
<evidence type="ECO:0007829" key="5">
    <source>
        <dbReference type="PDB" id="6T5X"/>
    </source>
</evidence>
<evidence type="ECO:0007829" key="6">
    <source>
        <dbReference type="PDB" id="6T7M"/>
    </source>
</evidence>
<feature type="chain" id="PRO_0000054681" description="3-oxoacyl-[acyl-carrier-protein] reductase FabG">
    <location>
        <begin position="1"/>
        <end position="244"/>
    </location>
</feature>
<feature type="active site" description="Proton acceptor" evidence="2">
    <location>
        <position position="151"/>
    </location>
</feature>
<feature type="binding site" evidence="1">
    <location>
        <begin position="12"/>
        <end position="15"/>
    </location>
    <ligand>
        <name>NADP(+)</name>
        <dbReference type="ChEBI" id="CHEBI:58349"/>
    </ligand>
</feature>
<feature type="binding site" evidence="1">
    <location>
        <position position="37"/>
    </location>
    <ligand>
        <name>NADP(+)</name>
        <dbReference type="ChEBI" id="CHEBI:58349"/>
    </ligand>
</feature>
<feature type="binding site" evidence="1">
    <location>
        <position position="50"/>
    </location>
    <ligand>
        <name>Ca(2+)</name>
        <dbReference type="ChEBI" id="CHEBI:29108"/>
        <label>1</label>
        <note>ligand shared between dimeric partners</note>
    </ligand>
</feature>
<feature type="binding site" evidence="1">
    <location>
        <position position="53"/>
    </location>
    <ligand>
        <name>Ca(2+)</name>
        <dbReference type="ChEBI" id="CHEBI:29108"/>
        <label>1</label>
        <note>ligand shared between dimeric partners</note>
    </ligand>
</feature>
<feature type="binding site" evidence="1">
    <location>
        <begin position="59"/>
        <end position="60"/>
    </location>
    <ligand>
        <name>NADP(+)</name>
        <dbReference type="ChEBI" id="CHEBI:58349"/>
    </ligand>
</feature>
<feature type="binding site" evidence="1">
    <location>
        <position position="86"/>
    </location>
    <ligand>
        <name>NADP(+)</name>
        <dbReference type="ChEBI" id="CHEBI:58349"/>
    </ligand>
</feature>
<feature type="binding site" evidence="1">
    <location>
        <position position="138"/>
    </location>
    <ligand>
        <name>substrate</name>
    </ligand>
</feature>
<feature type="binding site" evidence="1">
    <location>
        <position position="145"/>
    </location>
    <ligand>
        <name>Ca(2+)</name>
        <dbReference type="ChEBI" id="CHEBI:29108"/>
        <label>2</label>
    </ligand>
</feature>
<feature type="binding site" evidence="1">
    <location>
        <begin position="151"/>
        <end position="155"/>
    </location>
    <ligand>
        <name>NADP(+)</name>
        <dbReference type="ChEBI" id="CHEBI:58349"/>
    </ligand>
</feature>
<feature type="binding site" evidence="1">
    <location>
        <position position="184"/>
    </location>
    <ligand>
        <name>NADP(+)</name>
        <dbReference type="ChEBI" id="CHEBI:58349"/>
    </ligand>
</feature>
<feature type="binding site" evidence="1">
    <location>
        <position position="233"/>
    </location>
    <ligand>
        <name>Ca(2+)</name>
        <dbReference type="ChEBI" id="CHEBI:29108"/>
        <label>3</label>
        <note>ligand shared between dimeric partners</note>
    </ligand>
</feature>
<feature type="binding site" evidence="1">
    <location>
        <position position="234"/>
    </location>
    <ligand>
        <name>Ca(2+)</name>
        <dbReference type="ChEBI" id="CHEBI:29108"/>
        <label>3</label>
        <note>ligand shared between dimeric partners</note>
    </ligand>
</feature>
<feature type="mutagenesis site" description="Loss of the temperature-sensitive phenotype; when associated with T-223." evidence="3">
    <original>M</original>
    <variation>I</variation>
    <location>
        <position position="125"/>
    </location>
</feature>
<feature type="mutagenesis site" description="Loss of the temperature-sensitive phenotype; when associated with I-125." evidence="3">
    <original>A</original>
    <variation>T</variation>
    <location>
        <position position="223"/>
    </location>
</feature>
<feature type="mutagenesis site" description="Distorts the local conformation and prevent stacking around Phe-221. The S224F mutation would additionally disrupt the hydrogen bond formed between Ser-224 and Glu-226." evidence="3">
    <original>S</original>
    <variation>F</variation>
    <location>
        <position position="224"/>
    </location>
</feature>
<feature type="turn" evidence="6">
    <location>
        <begin position="2"/>
        <end position="5"/>
    </location>
</feature>
<feature type="strand" evidence="5">
    <location>
        <begin position="7"/>
        <end position="12"/>
    </location>
</feature>
<feature type="helix" evidence="5">
    <location>
        <begin position="16"/>
        <end position="27"/>
    </location>
</feature>
<feature type="strand" evidence="5">
    <location>
        <begin position="31"/>
        <end position="38"/>
    </location>
</feature>
<feature type="helix" evidence="5">
    <location>
        <begin position="39"/>
        <end position="49"/>
    </location>
</feature>
<feature type="helix" evidence="5">
    <location>
        <begin position="50"/>
        <end position="52"/>
    </location>
</feature>
<feature type="strand" evidence="5">
    <location>
        <begin position="53"/>
        <end position="57"/>
    </location>
</feature>
<feature type="helix" evidence="5">
    <location>
        <begin position="63"/>
        <end position="76"/>
    </location>
</feature>
<feature type="strand" evidence="5">
    <location>
        <begin position="81"/>
        <end position="85"/>
    </location>
</feature>
<feature type="helix" evidence="5">
    <location>
        <begin position="95"/>
        <end position="97"/>
    </location>
</feature>
<feature type="helix" evidence="5">
    <location>
        <begin position="100"/>
        <end position="110"/>
    </location>
</feature>
<feature type="helix" evidence="5">
    <location>
        <begin position="112"/>
        <end position="128"/>
    </location>
</feature>
<feature type="strand" evidence="5">
    <location>
        <begin position="131"/>
        <end position="136"/>
    </location>
</feature>
<feature type="helix" evidence="5">
    <location>
        <begin position="139"/>
        <end position="143"/>
    </location>
</feature>
<feature type="helix" evidence="5">
    <location>
        <begin position="149"/>
        <end position="169"/>
    </location>
</feature>
<feature type="helix" evidence="5">
    <location>
        <begin position="170"/>
        <end position="172"/>
    </location>
</feature>
<feature type="strand" evidence="5">
    <location>
        <begin position="174"/>
        <end position="181"/>
    </location>
</feature>
<feature type="strand" evidence="5">
    <location>
        <begin position="183"/>
        <end position="186"/>
    </location>
</feature>
<feature type="turn" evidence="5">
    <location>
        <begin position="187"/>
        <end position="191"/>
    </location>
</feature>
<feature type="helix" evidence="5">
    <location>
        <begin position="194"/>
        <end position="202"/>
    </location>
</feature>
<feature type="helix" evidence="5">
    <location>
        <begin position="212"/>
        <end position="223"/>
    </location>
</feature>
<feature type="helix" evidence="5">
    <location>
        <begin position="225"/>
        <end position="227"/>
    </location>
</feature>
<feature type="strand" evidence="5">
    <location>
        <begin position="234"/>
        <end position="238"/>
    </location>
</feature>
<accession>P0A2C9</accession>
<accession>O85141</accession>
<name>FABG_SALTY</name>
<reference key="1">
    <citation type="journal article" date="1998" name="J. Bacteriol.">
        <title>Transcriptional analysis of essential genes of the Escherichia coli fatty acid biosynthesis gene cluster by functional replacement with the analogous Salmonella typhimurium gene cluster.</title>
        <authorList>
            <person name="Zhang Y."/>
            <person name="Cronan J.E. Jr."/>
        </authorList>
    </citation>
    <scope>NUCLEOTIDE SEQUENCE [GENOMIC DNA]</scope>
    <source>
        <strain>LT2</strain>
    </source>
</reference>
<reference key="2">
    <citation type="journal article" date="2001" name="Nature">
        <title>Complete genome sequence of Salmonella enterica serovar Typhimurium LT2.</title>
        <authorList>
            <person name="McClelland M."/>
            <person name="Sanderson K.E."/>
            <person name="Spieth J."/>
            <person name="Clifton S.W."/>
            <person name="Latreille P."/>
            <person name="Courtney L."/>
            <person name="Porwollik S."/>
            <person name="Ali J."/>
            <person name="Dante M."/>
            <person name="Du F."/>
            <person name="Hou S."/>
            <person name="Layman D."/>
            <person name="Leonard S."/>
            <person name="Nguyen C."/>
            <person name="Scott K."/>
            <person name="Holmes A."/>
            <person name="Grewal N."/>
            <person name="Mulvaney E."/>
            <person name="Ryan E."/>
            <person name="Sun H."/>
            <person name="Florea L."/>
            <person name="Miller W."/>
            <person name="Stoneking T."/>
            <person name="Nhan M."/>
            <person name="Waterston R."/>
            <person name="Wilson R.K."/>
        </authorList>
    </citation>
    <scope>NUCLEOTIDE SEQUENCE [LARGE SCALE GENOMIC DNA]</scope>
    <source>
        <strain>LT2 / SGSC1412 / ATCC 700720</strain>
    </source>
</reference>
<reference key="3">
    <citation type="journal article" date="2004" name="J. Bacteriol.">
        <title>Isolation and characterization of beta-ketoacyl-acyl carrier protein reductase (fabG) mutants of Escherichia coli and Salmonella enterica serovar Typhimurium.</title>
        <authorList>
            <person name="Lai C.Y."/>
            <person name="Cronan J.E."/>
        </authorList>
    </citation>
    <scope>FUNCTION IN FATTY ACID BIOSYNTHESIS</scope>
    <scope>MUTAGENESIS OF MET-125; ALA-223 AND SER-224</scope>
</reference>
<gene>
    <name type="primary">fabG</name>
    <name type="ordered locus">STM1195</name>
</gene>
<protein>
    <recommendedName>
        <fullName>3-oxoacyl-[acyl-carrier-protein] reductase FabG</fullName>
        <ecNumber>1.1.1.100</ecNumber>
    </recommendedName>
    <alternativeName>
        <fullName>3-ketoacyl-acyl carrier protein reductase</fullName>
    </alternativeName>
    <alternativeName>
        <fullName>Beta-Ketoacyl-acyl carrier protein reductase</fullName>
    </alternativeName>
    <alternativeName>
        <fullName>Beta-ketoacyl-ACP reductase</fullName>
    </alternativeName>
</protein>